<gene>
    <name type="ordered locus">YNL235C</name>
    <name type="ORF">N1139</name>
</gene>
<proteinExistence type="uncertain"/>
<keyword id="KW-0472">Membrane</keyword>
<keyword id="KW-0812">Transmembrane</keyword>
<keyword id="KW-1133">Transmembrane helix</keyword>
<protein>
    <recommendedName>
        <fullName>Putative uncharacterized protein YNL235C</fullName>
    </recommendedName>
</protein>
<organism>
    <name type="scientific">Saccharomyces cerevisiae (strain ATCC 204508 / S288c)</name>
    <name type="common">Baker's yeast</name>
    <dbReference type="NCBI Taxonomy" id="559292"/>
    <lineage>
        <taxon>Eukaryota</taxon>
        <taxon>Fungi</taxon>
        <taxon>Dikarya</taxon>
        <taxon>Ascomycota</taxon>
        <taxon>Saccharomycotina</taxon>
        <taxon>Saccharomycetes</taxon>
        <taxon>Saccharomycetales</taxon>
        <taxon>Saccharomycetaceae</taxon>
        <taxon>Saccharomyces</taxon>
    </lineage>
</organism>
<sequence length="143" mass="16153">MRTLGILEERNSRHCHSHFFLLSREVKCLKQFYTKLCYSTNNQPSISKSIPEHMHSLVYMVGHLLVWMLVGTIVLSLDIIFPALVTEPHLLHLLSFPSDISDTLSLSQVTSSYSNLLKDLEVLFFMGSLSVSIINPSSNGCNK</sequence>
<evidence type="ECO:0000255" key="1"/>
<evidence type="ECO:0000305" key="2"/>
<evidence type="ECO:0000305" key="3">
    <source>
    </source>
</evidence>
<dbReference type="EMBL" id="Z69381">
    <property type="protein sequence ID" value="CAA93363.1"/>
    <property type="molecule type" value="Genomic_DNA"/>
</dbReference>
<dbReference type="EMBL" id="Z71512">
    <property type="protein sequence ID" value="CAA96141.1"/>
    <property type="molecule type" value="Genomic_DNA"/>
</dbReference>
<dbReference type="EMBL" id="AY558322">
    <property type="protein sequence ID" value="AAS56648.1"/>
    <property type="molecule type" value="Genomic_DNA"/>
</dbReference>
<dbReference type="PIR" id="S63201">
    <property type="entry name" value="S63201"/>
</dbReference>
<dbReference type="DIP" id="DIP-5321N"/>
<dbReference type="PaxDb" id="4932-YNL235C"/>
<dbReference type="EnsemblFungi" id="YNL235C_mRNA">
    <property type="protein sequence ID" value="YNL235C"/>
    <property type="gene ID" value="YNL235C"/>
</dbReference>
<dbReference type="AGR" id="SGD:S000005179"/>
<dbReference type="SGD" id="S000005179">
    <property type="gene designation" value="YNL235C"/>
</dbReference>
<dbReference type="HOGENOM" id="CLU_1807726_0_0_1"/>
<dbReference type="GO" id="GO:0016020">
    <property type="term" value="C:membrane"/>
    <property type="evidence" value="ECO:0007669"/>
    <property type="project" value="UniProtKB-SubCell"/>
</dbReference>
<feature type="chain" id="PRO_0000203385" description="Putative uncharacterized protein YNL235C">
    <location>
        <begin position="1"/>
        <end position="143"/>
    </location>
</feature>
<feature type="transmembrane region" description="Helical" evidence="1">
    <location>
        <begin position="65"/>
        <end position="85"/>
    </location>
</feature>
<accession>P53856</accession>
<reference key="1">
    <citation type="journal article" date="1996" name="Yeast">
        <title>The DNA sequence of cosmid 14-5 from chromosome XIV reveals 21 open reading frames including a novel gene encoding a globin-like domain.</title>
        <authorList>
            <person name="Pandolfo D."/>
            <person name="de Antoni A."/>
            <person name="Lanfranchi G."/>
            <person name="Valle G."/>
        </authorList>
    </citation>
    <scope>NUCLEOTIDE SEQUENCE [GENOMIC DNA]</scope>
</reference>
<reference key="2">
    <citation type="journal article" date="1997" name="Nature">
        <title>The nucleotide sequence of Saccharomyces cerevisiae chromosome XIV and its evolutionary implications.</title>
        <authorList>
            <person name="Philippsen P."/>
            <person name="Kleine K."/>
            <person name="Poehlmann R."/>
            <person name="Duesterhoeft A."/>
            <person name="Hamberg K."/>
            <person name="Hegemann J.H."/>
            <person name="Obermaier B."/>
            <person name="Urrestarazu L.A."/>
            <person name="Aert R."/>
            <person name="Albermann K."/>
            <person name="Altmann R."/>
            <person name="Andre B."/>
            <person name="Baladron V."/>
            <person name="Ballesta J.P.G."/>
            <person name="Becam A.-M."/>
            <person name="Beinhauer J.D."/>
            <person name="Boskovic J."/>
            <person name="Buitrago M.J."/>
            <person name="Bussereau F."/>
            <person name="Coster F."/>
            <person name="Crouzet M."/>
            <person name="D'Angelo M."/>
            <person name="Dal Pero F."/>
            <person name="De Antoni A."/>
            <person name="del Rey F."/>
            <person name="Doignon F."/>
            <person name="Domdey H."/>
            <person name="Dubois E."/>
            <person name="Fiedler T.A."/>
            <person name="Fleig U."/>
            <person name="Floeth M."/>
            <person name="Fritz C."/>
            <person name="Gaillardin C."/>
            <person name="Garcia-Cantalejo J.M."/>
            <person name="Glansdorff N."/>
            <person name="Goffeau A."/>
            <person name="Gueldener U."/>
            <person name="Herbert C.J."/>
            <person name="Heumann K."/>
            <person name="Heuss-Neitzel D."/>
            <person name="Hilbert H."/>
            <person name="Hinni K."/>
            <person name="Iraqui Houssaini I."/>
            <person name="Jacquet M."/>
            <person name="Jimenez A."/>
            <person name="Jonniaux J.-L."/>
            <person name="Karpfinger-Hartl L."/>
            <person name="Lanfranchi G."/>
            <person name="Lepingle A."/>
            <person name="Levesque H."/>
            <person name="Lyck R."/>
            <person name="Maftahi M."/>
            <person name="Mallet L."/>
            <person name="Maurer C.T.C."/>
            <person name="Messenguy F."/>
            <person name="Mewes H.-W."/>
            <person name="Moestl D."/>
            <person name="Nasr F."/>
            <person name="Nicaud J.-M."/>
            <person name="Niedenthal R.K."/>
            <person name="Pandolfo D."/>
            <person name="Pierard A."/>
            <person name="Piravandi E."/>
            <person name="Planta R.J."/>
            <person name="Pohl T.M."/>
            <person name="Purnelle B."/>
            <person name="Rebischung C."/>
            <person name="Remacha M.A."/>
            <person name="Revuelta J.L."/>
            <person name="Rinke M."/>
            <person name="Saiz J.E."/>
            <person name="Sartorello F."/>
            <person name="Scherens B."/>
            <person name="Sen-Gupta M."/>
            <person name="Soler-Mira A."/>
            <person name="Urbanus J.H.M."/>
            <person name="Valle G."/>
            <person name="Van Dyck L."/>
            <person name="Verhasselt P."/>
            <person name="Vierendeels F."/>
            <person name="Vissers S."/>
            <person name="Voet M."/>
            <person name="Volckaert G."/>
            <person name="Wach A."/>
            <person name="Wambutt R."/>
            <person name="Wedler H."/>
            <person name="Zollner A."/>
            <person name="Hani J."/>
        </authorList>
    </citation>
    <scope>NUCLEOTIDE SEQUENCE [LARGE SCALE GENOMIC DNA]</scope>
    <source>
        <strain>ATCC 204508 / S288c</strain>
    </source>
</reference>
<reference key="3">
    <citation type="journal article" date="2014" name="G3 (Bethesda)">
        <title>The reference genome sequence of Saccharomyces cerevisiae: Then and now.</title>
        <authorList>
            <person name="Engel S.R."/>
            <person name="Dietrich F.S."/>
            <person name="Fisk D.G."/>
            <person name="Binkley G."/>
            <person name="Balakrishnan R."/>
            <person name="Costanzo M.C."/>
            <person name="Dwight S.S."/>
            <person name="Hitz B.C."/>
            <person name="Karra K."/>
            <person name="Nash R.S."/>
            <person name="Weng S."/>
            <person name="Wong E.D."/>
            <person name="Lloyd P."/>
            <person name="Skrzypek M.S."/>
            <person name="Miyasato S.R."/>
            <person name="Simison M."/>
            <person name="Cherry J.M."/>
        </authorList>
    </citation>
    <scope>GENOME REANNOTATION</scope>
    <source>
        <strain>ATCC 204508 / S288c</strain>
    </source>
</reference>
<reference key="4">
    <citation type="journal article" date="2007" name="Genome Res.">
        <title>Approaching a complete repository of sequence-verified protein-encoding clones for Saccharomyces cerevisiae.</title>
        <authorList>
            <person name="Hu Y."/>
            <person name="Rolfs A."/>
            <person name="Bhullar B."/>
            <person name="Murthy T.V.S."/>
            <person name="Zhu C."/>
            <person name="Berger M.F."/>
            <person name="Camargo A.A."/>
            <person name="Kelley F."/>
            <person name="McCarron S."/>
            <person name="Jepson D."/>
            <person name="Richardson A."/>
            <person name="Raphael J."/>
            <person name="Moreira D."/>
            <person name="Taycher E."/>
            <person name="Zuo D."/>
            <person name="Mohr S."/>
            <person name="Kane M.F."/>
            <person name="Williamson J."/>
            <person name="Simpson A.J.G."/>
            <person name="Bulyk M.L."/>
            <person name="Harlow E."/>
            <person name="Marsischky G."/>
            <person name="Kolodner R.D."/>
            <person name="LaBaer J."/>
        </authorList>
    </citation>
    <scope>NUCLEOTIDE SEQUENCE [GENOMIC DNA]</scope>
    <source>
        <strain>ATCC 204508 / S288c</strain>
    </source>
</reference>
<comment type="subcellular location">
    <subcellularLocation>
        <location evidence="2">Membrane</location>
        <topology evidence="2">Single-pass membrane protein</topology>
    </subcellularLocation>
</comment>
<comment type="miscellaneous">
    <text evidence="2">Partially overlaps SIN4.</text>
</comment>
<comment type="caution">
    <text evidence="3">Product of a dubious gene prediction unlikely to encode a functional protein. Because of that it is not part of the S.cerevisiae S288c complete/reference proteome set.</text>
</comment>
<name>YNX5_YEAST</name>